<feature type="signal peptide" evidence="2">
    <location>
        <begin position="1"/>
        <end position="27"/>
    </location>
</feature>
<feature type="propeptide" id="PRO_0000029136" evidence="1">
    <location>
        <begin position="28"/>
        <end position="198"/>
    </location>
</feature>
<feature type="chain" id="PRO_0000029137" description="Disintegrin and metalloproteinase domain-containing protein 30">
    <location>
        <begin position="199"/>
        <end position="790"/>
    </location>
</feature>
<feature type="topological domain" description="Extracellular" evidence="2">
    <location>
        <begin position="199"/>
        <end position="687"/>
    </location>
</feature>
<feature type="transmembrane region" description="Helical" evidence="2">
    <location>
        <begin position="688"/>
        <end position="708"/>
    </location>
</feature>
<feature type="topological domain" description="Cytoplasmic" evidence="2">
    <location>
        <begin position="709"/>
        <end position="790"/>
    </location>
</feature>
<feature type="domain" description="Peptidase M12B" evidence="5">
    <location>
        <begin position="203"/>
        <end position="393"/>
    </location>
</feature>
<feature type="domain" description="Disintegrin" evidence="3">
    <location>
        <begin position="399"/>
        <end position="485"/>
    </location>
</feature>
<feature type="domain" description="EGF-like" evidence="4">
    <location>
        <begin position="629"/>
        <end position="663"/>
    </location>
</feature>
<feature type="repeat" description="1">
    <location>
        <begin position="732"/>
        <end position="740"/>
    </location>
</feature>
<feature type="repeat" description="2">
    <location>
        <begin position="741"/>
        <end position="749"/>
    </location>
</feature>
<feature type="repeat" description="3">
    <location>
        <begin position="750"/>
        <end position="758"/>
    </location>
</feature>
<feature type="repeat" description="4">
    <location>
        <begin position="759"/>
        <end position="767"/>
    </location>
</feature>
<feature type="repeat" description="5">
    <location>
        <begin position="768"/>
        <end position="776"/>
    </location>
</feature>
<feature type="region of interest" description="Disordered" evidence="6">
    <location>
        <begin position="720"/>
        <end position="790"/>
    </location>
</feature>
<feature type="region of interest" description="5 X 9 AA approximate repeats">
    <location>
        <begin position="732"/>
        <end position="776"/>
    </location>
</feature>
<feature type="short sequence motif" description="Cysteine switch" evidence="1">
    <location>
        <begin position="170"/>
        <end position="177"/>
    </location>
</feature>
<feature type="compositionally biased region" description="Basic and acidic residues" evidence="6">
    <location>
        <begin position="720"/>
        <end position="779"/>
    </location>
</feature>
<feature type="compositionally biased region" description="Basic residues" evidence="6">
    <location>
        <begin position="780"/>
        <end position="790"/>
    </location>
</feature>
<feature type="active site" evidence="5">
    <location>
        <position position="339"/>
    </location>
</feature>
<feature type="binding site" description="in inhibited form" evidence="1">
    <location>
        <position position="172"/>
    </location>
    <ligand>
        <name>Zn(2+)</name>
        <dbReference type="ChEBI" id="CHEBI:29105"/>
        <note>catalytic</note>
    </ligand>
</feature>
<feature type="binding site" evidence="5">
    <location>
        <position position="338"/>
    </location>
    <ligand>
        <name>Zn(2+)</name>
        <dbReference type="ChEBI" id="CHEBI:29105"/>
        <note>catalytic</note>
    </ligand>
</feature>
<feature type="binding site" evidence="5">
    <location>
        <position position="342"/>
    </location>
    <ligand>
        <name>Zn(2+)</name>
        <dbReference type="ChEBI" id="CHEBI:29105"/>
        <note>catalytic</note>
    </ligand>
</feature>
<feature type="binding site" evidence="5">
    <location>
        <position position="348"/>
    </location>
    <ligand>
        <name>Zn(2+)</name>
        <dbReference type="ChEBI" id="CHEBI:29105"/>
        <note>catalytic</note>
    </ligand>
</feature>
<feature type="glycosylation site" description="N-linked (GlcNAc...) asparagine" evidence="2">
    <location>
        <position position="222"/>
    </location>
</feature>
<feature type="glycosylation site" description="N-linked (GlcNAc...) asparagine" evidence="2">
    <location>
        <position position="372"/>
    </location>
</feature>
<feature type="glycosylation site" description="N-linked (GlcNAc...) asparagine" evidence="2">
    <location>
        <position position="438"/>
    </location>
</feature>
<feature type="glycosylation site" description="N-linked (GlcNAc...) asparagine" evidence="2">
    <location>
        <position position="473"/>
    </location>
</feature>
<feature type="glycosylation site" description="N-linked (GlcNAc...) asparagine" evidence="2">
    <location>
        <position position="625"/>
    </location>
</feature>
<feature type="disulfide bond" evidence="1">
    <location>
        <begin position="313"/>
        <end position="388"/>
    </location>
</feature>
<feature type="disulfide bond" evidence="1">
    <location>
        <begin position="353"/>
        <end position="373"/>
    </location>
</feature>
<feature type="disulfide bond" evidence="1">
    <location>
        <begin position="355"/>
        <end position="361"/>
    </location>
</feature>
<feature type="disulfide bond" evidence="1">
    <location>
        <begin position="457"/>
        <end position="477"/>
    </location>
</feature>
<feature type="disulfide bond" evidence="1">
    <location>
        <begin position="633"/>
        <end position="644"/>
    </location>
</feature>
<feature type="disulfide bond" evidence="1">
    <location>
        <begin position="638"/>
        <end position="650"/>
    </location>
</feature>
<feature type="disulfide bond" evidence="1">
    <location>
        <begin position="652"/>
        <end position="661"/>
    </location>
</feature>
<feature type="splice variant" id="VSP_005494" description="In isoform Beta." evidence="10">
    <location>
        <begin position="763"/>
        <end position="771"/>
    </location>
</feature>
<feature type="sequence variant" id="VAR_024597" description="In dbSNP:rs2641348." evidence="7 8">
    <original>L</original>
    <variation>P</variation>
    <location>
        <position position="359"/>
    </location>
</feature>
<feature type="sequence variant" id="VAR_061738" description="In dbSNP:rs35273427.">
    <original>T</original>
    <variation>A</variation>
    <location>
        <position position="737"/>
    </location>
</feature>
<feature type="mutagenesis site" description="Loss of enzymatic activity; when associated with L-342 and L-348." evidence="9">
    <original>H</original>
    <variation>L</variation>
    <location>
        <position position="338"/>
    </location>
</feature>
<feature type="mutagenesis site" description="Loss of enzymatic activity; when associated with L-338 and L-348." evidence="9">
    <original>H</original>
    <variation>L</variation>
    <location>
        <position position="342"/>
    </location>
</feature>
<feature type="mutagenesis site" description="Loss of enzymatic activity; when associated with L-338 and L-342." evidence="9">
    <original>H</original>
    <variation>L</variation>
    <location>
        <position position="348"/>
    </location>
</feature>
<feature type="sequence conflict" description="In Ref. 1; AAF03781." evidence="11" ref="1">
    <original>S</original>
    <variation>P</variation>
    <location>
        <position position="336"/>
    </location>
</feature>
<reference key="1">
    <citation type="journal article" date="1999" name="Biochem. Biophys. Res. Commun.">
        <title>Isolation of two novel metalloproteinase-disintegrin (ADAM) cDNAs that show testis-specific gene expression.</title>
        <authorList>
            <person name="Cerretti D.P."/>
            <person name="DuBose R.F."/>
            <person name="Black R.A."/>
            <person name="Nelson N."/>
        </authorList>
    </citation>
    <scope>NUCLEOTIDE SEQUENCE [MRNA] (ISOFORMS ALPHA AND BETA)</scope>
    <scope>VARIANT PRO-359</scope>
    <scope>TISSUE SPECIFICITY</scope>
    <source>
        <tissue>Testis</tissue>
    </source>
</reference>
<reference key="2">
    <citation type="journal article" date="2003" name="Genome Res.">
        <title>The secreted protein discovery initiative (SPDI), a large-scale effort to identify novel human secreted and transmembrane proteins: a bioinformatics assessment.</title>
        <authorList>
            <person name="Clark H.F."/>
            <person name="Gurney A.L."/>
            <person name="Abaya E."/>
            <person name="Baker K."/>
            <person name="Baldwin D.T."/>
            <person name="Brush J."/>
            <person name="Chen J."/>
            <person name="Chow B."/>
            <person name="Chui C."/>
            <person name="Crowley C."/>
            <person name="Currell B."/>
            <person name="Deuel B."/>
            <person name="Dowd P."/>
            <person name="Eaton D."/>
            <person name="Foster J.S."/>
            <person name="Grimaldi C."/>
            <person name="Gu Q."/>
            <person name="Hass P.E."/>
            <person name="Heldens S."/>
            <person name="Huang A."/>
            <person name="Kim H.S."/>
            <person name="Klimowski L."/>
            <person name="Jin Y."/>
            <person name="Johnson S."/>
            <person name="Lee J."/>
            <person name="Lewis L."/>
            <person name="Liao D."/>
            <person name="Mark M.R."/>
            <person name="Robbie E."/>
            <person name="Sanchez C."/>
            <person name="Schoenfeld J."/>
            <person name="Seshagiri S."/>
            <person name="Simmons L."/>
            <person name="Singh J."/>
            <person name="Smith V."/>
            <person name="Stinson J."/>
            <person name="Vagts A."/>
            <person name="Vandlen R.L."/>
            <person name="Watanabe C."/>
            <person name="Wieand D."/>
            <person name="Woods K."/>
            <person name="Xie M.-H."/>
            <person name="Yansura D.G."/>
            <person name="Yi S."/>
            <person name="Yu G."/>
            <person name="Yuan J."/>
            <person name="Zhang M."/>
            <person name="Zhang Z."/>
            <person name="Goddard A.D."/>
            <person name="Wood W.I."/>
            <person name="Godowski P.J."/>
            <person name="Gray A.M."/>
        </authorList>
    </citation>
    <scope>NUCLEOTIDE SEQUENCE [LARGE SCALE MRNA] (ISOFORM ALPHA)</scope>
</reference>
<reference key="3">
    <citation type="journal article" date="2004" name="Nat. Genet.">
        <title>Complete sequencing and characterization of 21,243 full-length human cDNAs.</title>
        <authorList>
            <person name="Ota T."/>
            <person name="Suzuki Y."/>
            <person name="Nishikawa T."/>
            <person name="Otsuki T."/>
            <person name="Sugiyama T."/>
            <person name="Irie R."/>
            <person name="Wakamatsu A."/>
            <person name="Hayashi K."/>
            <person name="Sato H."/>
            <person name="Nagai K."/>
            <person name="Kimura K."/>
            <person name="Makita H."/>
            <person name="Sekine M."/>
            <person name="Obayashi M."/>
            <person name="Nishi T."/>
            <person name="Shibahara T."/>
            <person name="Tanaka T."/>
            <person name="Ishii S."/>
            <person name="Yamamoto J."/>
            <person name="Saito K."/>
            <person name="Kawai Y."/>
            <person name="Isono Y."/>
            <person name="Nakamura Y."/>
            <person name="Nagahari K."/>
            <person name="Murakami K."/>
            <person name="Yasuda T."/>
            <person name="Iwayanagi T."/>
            <person name="Wagatsuma M."/>
            <person name="Shiratori A."/>
            <person name="Sudo H."/>
            <person name="Hosoiri T."/>
            <person name="Kaku Y."/>
            <person name="Kodaira H."/>
            <person name="Kondo H."/>
            <person name="Sugawara M."/>
            <person name="Takahashi M."/>
            <person name="Kanda K."/>
            <person name="Yokoi T."/>
            <person name="Furuya T."/>
            <person name="Kikkawa E."/>
            <person name="Omura Y."/>
            <person name="Abe K."/>
            <person name="Kamihara K."/>
            <person name="Katsuta N."/>
            <person name="Sato K."/>
            <person name="Tanikawa M."/>
            <person name="Yamazaki M."/>
            <person name="Ninomiya K."/>
            <person name="Ishibashi T."/>
            <person name="Yamashita H."/>
            <person name="Murakawa K."/>
            <person name="Fujimori K."/>
            <person name="Tanai H."/>
            <person name="Kimata M."/>
            <person name="Watanabe M."/>
            <person name="Hiraoka S."/>
            <person name="Chiba Y."/>
            <person name="Ishida S."/>
            <person name="Ono Y."/>
            <person name="Takiguchi S."/>
            <person name="Watanabe S."/>
            <person name="Yosida M."/>
            <person name="Hotuta T."/>
            <person name="Kusano J."/>
            <person name="Kanehori K."/>
            <person name="Takahashi-Fujii A."/>
            <person name="Hara H."/>
            <person name="Tanase T.-O."/>
            <person name="Nomura Y."/>
            <person name="Togiya S."/>
            <person name="Komai F."/>
            <person name="Hara R."/>
            <person name="Takeuchi K."/>
            <person name="Arita M."/>
            <person name="Imose N."/>
            <person name="Musashino K."/>
            <person name="Yuuki H."/>
            <person name="Oshima A."/>
            <person name="Sasaki N."/>
            <person name="Aotsuka S."/>
            <person name="Yoshikawa Y."/>
            <person name="Matsunawa H."/>
            <person name="Ichihara T."/>
            <person name="Shiohata N."/>
            <person name="Sano S."/>
            <person name="Moriya S."/>
            <person name="Momiyama H."/>
            <person name="Satoh N."/>
            <person name="Takami S."/>
            <person name="Terashima Y."/>
            <person name="Suzuki O."/>
            <person name="Nakagawa S."/>
            <person name="Senoh A."/>
            <person name="Mizoguchi H."/>
            <person name="Goto Y."/>
            <person name="Shimizu F."/>
            <person name="Wakebe H."/>
            <person name="Hishigaki H."/>
            <person name="Watanabe T."/>
            <person name="Sugiyama A."/>
            <person name="Takemoto M."/>
            <person name="Kawakami B."/>
            <person name="Yamazaki M."/>
            <person name="Watanabe K."/>
            <person name="Kumagai A."/>
            <person name="Itakura S."/>
            <person name="Fukuzumi Y."/>
            <person name="Fujimori Y."/>
            <person name="Komiyama M."/>
            <person name="Tashiro H."/>
            <person name="Tanigami A."/>
            <person name="Fujiwara T."/>
            <person name="Ono T."/>
            <person name="Yamada K."/>
            <person name="Fujii Y."/>
            <person name="Ozaki K."/>
            <person name="Hirao M."/>
            <person name="Ohmori Y."/>
            <person name="Kawabata A."/>
            <person name="Hikiji T."/>
            <person name="Kobatake N."/>
            <person name="Inagaki H."/>
            <person name="Ikema Y."/>
            <person name="Okamoto S."/>
            <person name="Okitani R."/>
            <person name="Kawakami T."/>
            <person name="Noguchi S."/>
            <person name="Itoh T."/>
            <person name="Shigeta K."/>
            <person name="Senba T."/>
            <person name="Matsumura K."/>
            <person name="Nakajima Y."/>
            <person name="Mizuno T."/>
            <person name="Morinaga M."/>
            <person name="Sasaki M."/>
            <person name="Togashi T."/>
            <person name="Oyama M."/>
            <person name="Hata H."/>
            <person name="Watanabe M."/>
            <person name="Komatsu T."/>
            <person name="Mizushima-Sugano J."/>
            <person name="Satoh T."/>
            <person name="Shirai Y."/>
            <person name="Takahashi Y."/>
            <person name="Nakagawa K."/>
            <person name="Okumura K."/>
            <person name="Nagase T."/>
            <person name="Nomura N."/>
            <person name="Kikuchi H."/>
            <person name="Masuho Y."/>
            <person name="Yamashita R."/>
            <person name="Nakai K."/>
            <person name="Yada T."/>
            <person name="Nakamura Y."/>
            <person name="Ohara O."/>
            <person name="Isogai T."/>
            <person name="Sugano S."/>
        </authorList>
    </citation>
    <scope>NUCLEOTIDE SEQUENCE [LARGE SCALE MRNA] (ISOFORM ALPHA)</scope>
    <scope>VARIANT PRO-359</scope>
    <source>
        <tissue>Testis</tissue>
    </source>
</reference>
<reference key="4">
    <citation type="journal article" date="2006" name="Nature">
        <title>The DNA sequence and biological annotation of human chromosome 1.</title>
        <authorList>
            <person name="Gregory S.G."/>
            <person name="Barlow K.F."/>
            <person name="McLay K.E."/>
            <person name="Kaul R."/>
            <person name="Swarbreck D."/>
            <person name="Dunham A."/>
            <person name="Scott C.E."/>
            <person name="Howe K.L."/>
            <person name="Woodfine K."/>
            <person name="Spencer C.C.A."/>
            <person name="Jones M.C."/>
            <person name="Gillson C."/>
            <person name="Searle S."/>
            <person name="Zhou Y."/>
            <person name="Kokocinski F."/>
            <person name="McDonald L."/>
            <person name="Evans R."/>
            <person name="Phillips K."/>
            <person name="Atkinson A."/>
            <person name="Cooper R."/>
            <person name="Jones C."/>
            <person name="Hall R.E."/>
            <person name="Andrews T.D."/>
            <person name="Lloyd C."/>
            <person name="Ainscough R."/>
            <person name="Almeida J.P."/>
            <person name="Ambrose K.D."/>
            <person name="Anderson F."/>
            <person name="Andrew R.W."/>
            <person name="Ashwell R.I.S."/>
            <person name="Aubin K."/>
            <person name="Babbage A.K."/>
            <person name="Bagguley C.L."/>
            <person name="Bailey J."/>
            <person name="Beasley H."/>
            <person name="Bethel G."/>
            <person name="Bird C.P."/>
            <person name="Bray-Allen S."/>
            <person name="Brown J.Y."/>
            <person name="Brown A.J."/>
            <person name="Buckley D."/>
            <person name="Burton J."/>
            <person name="Bye J."/>
            <person name="Carder C."/>
            <person name="Chapman J.C."/>
            <person name="Clark S.Y."/>
            <person name="Clarke G."/>
            <person name="Clee C."/>
            <person name="Cobley V."/>
            <person name="Collier R.E."/>
            <person name="Corby N."/>
            <person name="Coville G.J."/>
            <person name="Davies J."/>
            <person name="Deadman R."/>
            <person name="Dunn M."/>
            <person name="Earthrowl M."/>
            <person name="Ellington A.G."/>
            <person name="Errington H."/>
            <person name="Frankish A."/>
            <person name="Frankland J."/>
            <person name="French L."/>
            <person name="Garner P."/>
            <person name="Garnett J."/>
            <person name="Gay L."/>
            <person name="Ghori M.R.J."/>
            <person name="Gibson R."/>
            <person name="Gilby L.M."/>
            <person name="Gillett W."/>
            <person name="Glithero R.J."/>
            <person name="Grafham D.V."/>
            <person name="Griffiths C."/>
            <person name="Griffiths-Jones S."/>
            <person name="Grocock R."/>
            <person name="Hammond S."/>
            <person name="Harrison E.S.I."/>
            <person name="Hart E."/>
            <person name="Haugen E."/>
            <person name="Heath P.D."/>
            <person name="Holmes S."/>
            <person name="Holt K."/>
            <person name="Howden P.J."/>
            <person name="Hunt A.R."/>
            <person name="Hunt S.E."/>
            <person name="Hunter G."/>
            <person name="Isherwood J."/>
            <person name="James R."/>
            <person name="Johnson C."/>
            <person name="Johnson D."/>
            <person name="Joy A."/>
            <person name="Kay M."/>
            <person name="Kershaw J.K."/>
            <person name="Kibukawa M."/>
            <person name="Kimberley A.M."/>
            <person name="King A."/>
            <person name="Knights A.J."/>
            <person name="Lad H."/>
            <person name="Laird G."/>
            <person name="Lawlor S."/>
            <person name="Leongamornlert D.A."/>
            <person name="Lloyd D.M."/>
            <person name="Loveland J."/>
            <person name="Lovell J."/>
            <person name="Lush M.J."/>
            <person name="Lyne R."/>
            <person name="Martin S."/>
            <person name="Mashreghi-Mohammadi M."/>
            <person name="Matthews L."/>
            <person name="Matthews N.S.W."/>
            <person name="McLaren S."/>
            <person name="Milne S."/>
            <person name="Mistry S."/>
            <person name="Moore M.J.F."/>
            <person name="Nickerson T."/>
            <person name="O'Dell C.N."/>
            <person name="Oliver K."/>
            <person name="Palmeiri A."/>
            <person name="Palmer S.A."/>
            <person name="Parker A."/>
            <person name="Patel D."/>
            <person name="Pearce A.V."/>
            <person name="Peck A.I."/>
            <person name="Pelan S."/>
            <person name="Phelps K."/>
            <person name="Phillimore B.J."/>
            <person name="Plumb R."/>
            <person name="Rajan J."/>
            <person name="Raymond C."/>
            <person name="Rouse G."/>
            <person name="Saenphimmachak C."/>
            <person name="Sehra H.K."/>
            <person name="Sheridan E."/>
            <person name="Shownkeen R."/>
            <person name="Sims S."/>
            <person name="Skuce C.D."/>
            <person name="Smith M."/>
            <person name="Steward C."/>
            <person name="Subramanian S."/>
            <person name="Sycamore N."/>
            <person name="Tracey A."/>
            <person name="Tromans A."/>
            <person name="Van Helmond Z."/>
            <person name="Wall M."/>
            <person name="Wallis J.M."/>
            <person name="White S."/>
            <person name="Whitehead S.L."/>
            <person name="Wilkinson J.E."/>
            <person name="Willey D.L."/>
            <person name="Williams H."/>
            <person name="Wilming L."/>
            <person name="Wray P.W."/>
            <person name="Wu Z."/>
            <person name="Coulson A."/>
            <person name="Vaudin M."/>
            <person name="Sulston J.E."/>
            <person name="Durbin R.M."/>
            <person name="Hubbard T."/>
            <person name="Wooster R."/>
            <person name="Dunham I."/>
            <person name="Carter N.P."/>
            <person name="McVean G."/>
            <person name="Ross M.T."/>
            <person name="Harrow J."/>
            <person name="Olson M.V."/>
            <person name="Beck S."/>
            <person name="Rogers J."/>
            <person name="Bentley D.R."/>
        </authorList>
    </citation>
    <scope>NUCLEOTIDE SEQUENCE [LARGE SCALE GENOMIC DNA]</scope>
</reference>
<reference key="5">
    <citation type="journal article" date="2016" name="EBioMedicine">
        <title>ADAM30 Downregulates APP-Linked Defects Through Cathepsin D Activation in Alzheimer's Disease.</title>
        <authorList>
            <person name="Letronne F."/>
            <person name="Laumet G."/>
            <person name="Ayral A.M."/>
            <person name="Chapuis J."/>
            <person name="Demiautte F."/>
            <person name="Laga M."/>
            <person name="Vandenberghe M.E."/>
            <person name="Malmanche N."/>
            <person name="Leroux F."/>
            <person name="Eysert F."/>
            <person name="Sottejeau Y."/>
            <person name="Chami L."/>
            <person name="Flaig A."/>
            <person name="Bauer C."/>
            <person name="Dourlen P."/>
            <person name="Lesaffre M."/>
            <person name="Delay C."/>
            <person name="Huot L."/>
            <person name="Dumont J."/>
            <person name="Werkmeister E."/>
            <person name="Lafont F."/>
            <person name="Mendes T."/>
            <person name="Hansmannel F."/>
            <person name="Dermaut B."/>
            <person name="Deprez B."/>
            <person name="Herard A.S."/>
            <person name="Dhenain M."/>
            <person name="Souedet N."/>
            <person name="Pasquier F."/>
            <person name="Tulasne D."/>
            <person name="Berr C."/>
            <person name="Hauw J.J."/>
            <person name="Lemoine Y."/>
            <person name="Amouyel P."/>
            <person name="Mann D."/>
            <person name="Deprez R."/>
            <person name="Checler F."/>
            <person name="Hot D."/>
            <person name="Delzescaux T."/>
            <person name="Gevaert K."/>
            <person name="Lambert J.C."/>
        </authorList>
    </citation>
    <scope>FUNCTION</scope>
    <scope>INTERACTION WITH CTSD</scope>
    <scope>SUBCELLULAR LOCATION</scope>
    <scope>TISSUE SPECIFICITY</scope>
    <scope>MUTAGENESIS OF HIS-338; HIS-342 AND HIS-348</scope>
</reference>
<evidence type="ECO:0000250" key="1"/>
<evidence type="ECO:0000255" key="2"/>
<evidence type="ECO:0000255" key="3">
    <source>
        <dbReference type="PROSITE-ProRule" id="PRU00068"/>
    </source>
</evidence>
<evidence type="ECO:0000255" key="4">
    <source>
        <dbReference type="PROSITE-ProRule" id="PRU00076"/>
    </source>
</evidence>
<evidence type="ECO:0000255" key="5">
    <source>
        <dbReference type="PROSITE-ProRule" id="PRU00276"/>
    </source>
</evidence>
<evidence type="ECO:0000256" key="6">
    <source>
        <dbReference type="SAM" id="MobiDB-lite"/>
    </source>
</evidence>
<evidence type="ECO:0000269" key="7">
    <source>
    </source>
</evidence>
<evidence type="ECO:0000269" key="8">
    <source>
    </source>
</evidence>
<evidence type="ECO:0000269" key="9">
    <source>
    </source>
</evidence>
<evidence type="ECO:0000303" key="10">
    <source>
    </source>
</evidence>
<evidence type="ECO:0000305" key="11"/>
<protein>
    <recommendedName>
        <fullName>Disintegrin and metalloproteinase domain-containing protein 30</fullName>
        <shortName>ADAM 30</shortName>
        <ecNumber>3.4.24.-</ecNumber>
    </recommendedName>
</protein>
<keyword id="KW-0025">Alternative splicing</keyword>
<keyword id="KW-1015">Disulfide bond</keyword>
<keyword id="KW-0245">EGF-like domain</keyword>
<keyword id="KW-0967">Endosome</keyword>
<keyword id="KW-0325">Glycoprotein</keyword>
<keyword id="KW-0378">Hydrolase</keyword>
<keyword id="KW-0472">Membrane</keyword>
<keyword id="KW-0479">Metal-binding</keyword>
<keyword id="KW-0482">Metalloprotease</keyword>
<keyword id="KW-0645">Protease</keyword>
<keyword id="KW-1267">Proteomics identification</keyword>
<keyword id="KW-1185">Reference proteome</keyword>
<keyword id="KW-0677">Repeat</keyword>
<keyword id="KW-0732">Signal</keyword>
<keyword id="KW-0812">Transmembrane</keyword>
<keyword id="KW-1133">Transmembrane helix</keyword>
<keyword id="KW-0862">Zinc</keyword>
<keyword id="KW-0865">Zymogen</keyword>
<sequence>MRSVQIFLSQCRLLLLLVPTMLLKSLGEDVIFHPEGEFDSYEVTIPEKLSFRGEVQGVVSPVSYLLQLKGKKHVLHLWPKRLLLPRHLRVFSFTEHGELLEDHPYIPKDCNYMGSVKESLDSKATISTCMGGLRGVFNIDAKHYQIEPLKASPSFEHVVYLLKKEQFGNQVCGLSDDEIEWQMAPYENKARLRDFPGSYKHPKYLELILLFDQSRYRFVNNNLSQVIHDAILLTGIMDTYFQDVRMRIHLKALEVWTDFNKIRVGYPELAEVLGRFVIYKKSVLNARLSSDWAHLYLQRKYNDALAWSFGKVCSLEYAGSVSTLLDTNILAPATWSAHELGHAVGMSHDEQYCQCRGRLNCIMGSGRTGFSNCSYISFFKHISSGATCLNNIPGLGYVLKRCGNKIVEDNEECDCGSTEECQKDRCCQSNCKLQPGANCSIGLCCHDCRFRPSGYVCRQEGNECDLAEYCDGNSSSCPNDVYKQDGTPCKYEGRCFRKGCRSRYMQCQSIFGPDAMEAPSECYDAVNLIGDQFGNCEITGIRNFKKCESANSICGRLQCINVETIPDLPEHTTIISTHLQAENLMCWGTGYHLSMKPMGIPDLGMINDGTSCGEGRVCFKKNCVNSSVLQFDCLPEKCNTRGVCNNRKNCHCMYGWAPPFCEEVGYGGSIDSGPPGLLRGAIPSSIWVVSIIMFRLILLILSVVFVFFRQVIGNHLKPKQEKMPLSKAKTEQEESKTKTVQEESKTKTGQEESEAKTGQEESKAKTGQEESKANIESKRPKAKSVKKQKK</sequence>
<name>ADA30_HUMAN</name>
<dbReference type="EC" id="3.4.24.-"/>
<dbReference type="EMBL" id="AF171932">
    <property type="protein sequence ID" value="AAF03780.1"/>
    <property type="molecule type" value="mRNA"/>
</dbReference>
<dbReference type="EMBL" id="AF171933">
    <property type="protein sequence ID" value="AAF03781.1"/>
    <property type="molecule type" value="mRNA"/>
</dbReference>
<dbReference type="EMBL" id="AY358734">
    <property type="protein sequence ID" value="AAQ89096.1"/>
    <property type="molecule type" value="mRNA"/>
</dbReference>
<dbReference type="EMBL" id="AK292483">
    <property type="protein sequence ID" value="BAF85172.1"/>
    <property type="molecule type" value="mRNA"/>
</dbReference>
<dbReference type="EMBL" id="AL359752">
    <property type="status" value="NOT_ANNOTATED_CDS"/>
    <property type="molecule type" value="Genomic_DNA"/>
</dbReference>
<dbReference type="CCDS" id="CCDS907.1">
    <molecule id="Q9UKF2-1"/>
</dbReference>
<dbReference type="RefSeq" id="NP_068566.2">
    <molecule id="Q9UKF2-1"/>
    <property type="nucleotide sequence ID" value="NM_021794.3"/>
</dbReference>
<dbReference type="SMR" id="Q9UKF2"/>
<dbReference type="BioGRID" id="116267">
    <property type="interactions" value="72"/>
</dbReference>
<dbReference type="FunCoup" id="Q9UKF2">
    <property type="interactions" value="26"/>
</dbReference>
<dbReference type="IntAct" id="Q9UKF2">
    <property type="interactions" value="53"/>
</dbReference>
<dbReference type="STRING" id="9606.ENSP00000358407"/>
<dbReference type="MEROPS" id="M12.232"/>
<dbReference type="GlyCosmos" id="Q9UKF2">
    <property type="glycosylation" value="5 sites, No reported glycans"/>
</dbReference>
<dbReference type="GlyGen" id="Q9UKF2">
    <property type="glycosylation" value="5 sites"/>
</dbReference>
<dbReference type="iPTMnet" id="Q9UKF2"/>
<dbReference type="PhosphoSitePlus" id="Q9UKF2"/>
<dbReference type="BioMuta" id="ADAM30"/>
<dbReference type="DMDM" id="47117918"/>
<dbReference type="jPOST" id="Q9UKF2"/>
<dbReference type="MassIVE" id="Q9UKF2"/>
<dbReference type="PaxDb" id="9606-ENSP00000358407"/>
<dbReference type="PeptideAtlas" id="Q9UKF2"/>
<dbReference type="ProteomicsDB" id="84777">
    <molecule id="Q9UKF2-1"/>
</dbReference>
<dbReference type="ProteomicsDB" id="84778">
    <molecule id="Q9UKF2-2"/>
</dbReference>
<dbReference type="Antibodypedia" id="20207">
    <property type="antibodies" value="85 antibodies from 21 providers"/>
</dbReference>
<dbReference type="DNASU" id="11085"/>
<dbReference type="Ensembl" id="ENST00000369400.2">
    <molecule id="Q9UKF2-1"/>
    <property type="protein sequence ID" value="ENSP00000358407.1"/>
    <property type="gene ID" value="ENSG00000134249.7"/>
</dbReference>
<dbReference type="GeneID" id="11085"/>
<dbReference type="KEGG" id="hsa:11085"/>
<dbReference type="MANE-Select" id="ENST00000369400.2">
    <property type="protein sequence ID" value="ENSP00000358407.1"/>
    <property type="RefSeq nucleotide sequence ID" value="NM_021794.4"/>
    <property type="RefSeq protein sequence ID" value="NP_068566.2"/>
</dbReference>
<dbReference type="UCSC" id="uc001eij.4">
    <molecule id="Q9UKF2-1"/>
    <property type="organism name" value="human"/>
</dbReference>
<dbReference type="AGR" id="HGNC:208"/>
<dbReference type="CTD" id="11085"/>
<dbReference type="DisGeNET" id="11085"/>
<dbReference type="GeneCards" id="ADAM30"/>
<dbReference type="HGNC" id="HGNC:208">
    <property type="gene designation" value="ADAM30"/>
</dbReference>
<dbReference type="HPA" id="ENSG00000134249">
    <property type="expression patterns" value="Tissue enriched (testis)"/>
</dbReference>
<dbReference type="MIM" id="604779">
    <property type="type" value="gene"/>
</dbReference>
<dbReference type="neXtProt" id="NX_Q9UKF2"/>
<dbReference type="OpenTargets" id="ENSG00000134249"/>
<dbReference type="PharmGKB" id="PA24525"/>
<dbReference type="VEuPathDB" id="HostDB:ENSG00000134249"/>
<dbReference type="eggNOG" id="KOG3607">
    <property type="taxonomic scope" value="Eukaryota"/>
</dbReference>
<dbReference type="GeneTree" id="ENSGT00940000162954"/>
<dbReference type="HOGENOM" id="CLU_012714_4_0_1"/>
<dbReference type="InParanoid" id="Q9UKF2"/>
<dbReference type="OMA" id="ICGRLQC"/>
<dbReference type="OrthoDB" id="5951731at2759"/>
<dbReference type="PAN-GO" id="Q9UKF2">
    <property type="GO annotations" value="1 GO annotation based on evolutionary models"/>
</dbReference>
<dbReference type="PhylomeDB" id="Q9UKF2"/>
<dbReference type="TreeFam" id="TF314733"/>
<dbReference type="PathwayCommons" id="Q9UKF2"/>
<dbReference type="Reactome" id="R-HSA-2534343">
    <property type="pathway name" value="Interaction With Cumulus Cells And The Zona Pellucida"/>
</dbReference>
<dbReference type="SignaLink" id="Q9UKF2"/>
<dbReference type="BioGRID-ORCS" id="11085">
    <property type="hits" value="12 hits in 1147 CRISPR screens"/>
</dbReference>
<dbReference type="GenomeRNAi" id="11085"/>
<dbReference type="Pharos" id="Q9UKF2">
    <property type="development level" value="Tdark"/>
</dbReference>
<dbReference type="PRO" id="PR:Q9UKF2"/>
<dbReference type="Proteomes" id="UP000005640">
    <property type="component" value="Chromosome 1"/>
</dbReference>
<dbReference type="RNAct" id="Q9UKF2">
    <property type="molecule type" value="protein"/>
</dbReference>
<dbReference type="Bgee" id="ENSG00000134249">
    <property type="expression patterns" value="Expressed in sperm and 20 other cell types or tissues"/>
</dbReference>
<dbReference type="GO" id="GO:0009897">
    <property type="term" value="C:external side of plasma membrane"/>
    <property type="evidence" value="ECO:0000318"/>
    <property type="project" value="GO_Central"/>
</dbReference>
<dbReference type="GO" id="GO:0031902">
    <property type="term" value="C:late endosome membrane"/>
    <property type="evidence" value="ECO:0007669"/>
    <property type="project" value="UniProtKB-SubCell"/>
</dbReference>
<dbReference type="GO" id="GO:0016020">
    <property type="term" value="C:membrane"/>
    <property type="evidence" value="ECO:0000304"/>
    <property type="project" value="ProtInc"/>
</dbReference>
<dbReference type="GO" id="GO:0005886">
    <property type="term" value="C:plasma membrane"/>
    <property type="evidence" value="ECO:0000318"/>
    <property type="project" value="GO_Central"/>
</dbReference>
<dbReference type="GO" id="GO:1990913">
    <property type="term" value="C:sperm head plasma membrane"/>
    <property type="evidence" value="ECO:0000318"/>
    <property type="project" value="GO_Central"/>
</dbReference>
<dbReference type="GO" id="GO:0004222">
    <property type="term" value="F:metalloendopeptidase activity"/>
    <property type="evidence" value="ECO:0000318"/>
    <property type="project" value="GO_Central"/>
</dbReference>
<dbReference type="GO" id="GO:0008237">
    <property type="term" value="F:metallopeptidase activity"/>
    <property type="evidence" value="ECO:0000304"/>
    <property type="project" value="ProtInc"/>
</dbReference>
<dbReference type="GO" id="GO:0008270">
    <property type="term" value="F:zinc ion binding"/>
    <property type="evidence" value="ECO:0000304"/>
    <property type="project" value="ProtInc"/>
</dbReference>
<dbReference type="GO" id="GO:0008584">
    <property type="term" value="P:male gonad development"/>
    <property type="evidence" value="ECO:0000318"/>
    <property type="project" value="GO_Central"/>
</dbReference>
<dbReference type="GO" id="GO:0006508">
    <property type="term" value="P:proteolysis"/>
    <property type="evidence" value="ECO:0000318"/>
    <property type="project" value="GO_Central"/>
</dbReference>
<dbReference type="CDD" id="cd04269">
    <property type="entry name" value="ZnMc_adamalysin_II_like"/>
    <property type="match status" value="1"/>
</dbReference>
<dbReference type="FunFam" id="3.40.390.10:FF:000080">
    <property type="entry name" value="A disintegrin and metallopeptidase domain 30"/>
    <property type="match status" value="1"/>
</dbReference>
<dbReference type="FunFam" id="4.10.70.10:FF:000001">
    <property type="entry name" value="Disintegrin and metalloproteinase domain-containing protein 22"/>
    <property type="match status" value="1"/>
</dbReference>
<dbReference type="Gene3D" id="3.40.390.10">
    <property type="entry name" value="Collagenase (Catalytic Domain)"/>
    <property type="match status" value="1"/>
</dbReference>
<dbReference type="Gene3D" id="4.10.70.10">
    <property type="entry name" value="Disintegrin domain"/>
    <property type="match status" value="1"/>
</dbReference>
<dbReference type="InterPro" id="IPR006586">
    <property type="entry name" value="ADAM_Cys-rich"/>
</dbReference>
<dbReference type="InterPro" id="IPR018358">
    <property type="entry name" value="Disintegrin_CS"/>
</dbReference>
<dbReference type="InterPro" id="IPR001762">
    <property type="entry name" value="Disintegrin_dom"/>
</dbReference>
<dbReference type="InterPro" id="IPR036436">
    <property type="entry name" value="Disintegrin_dom_sf"/>
</dbReference>
<dbReference type="InterPro" id="IPR000742">
    <property type="entry name" value="EGF-like_dom"/>
</dbReference>
<dbReference type="InterPro" id="IPR024079">
    <property type="entry name" value="MetalloPept_cat_dom_sf"/>
</dbReference>
<dbReference type="InterPro" id="IPR001590">
    <property type="entry name" value="Peptidase_M12B"/>
</dbReference>
<dbReference type="InterPro" id="IPR002870">
    <property type="entry name" value="Peptidase_M12B_N"/>
</dbReference>
<dbReference type="InterPro" id="IPR034027">
    <property type="entry name" value="Reprolysin_adamalysin"/>
</dbReference>
<dbReference type="PANTHER" id="PTHR11905">
    <property type="entry name" value="ADAM A DISINTEGRIN AND METALLOPROTEASE DOMAIN"/>
    <property type="match status" value="1"/>
</dbReference>
<dbReference type="PANTHER" id="PTHR11905:SF148">
    <property type="entry name" value="DISINTEGRIN AND METALLOPROTEINASE DOMAIN-CONTAINING PROTEIN 30"/>
    <property type="match status" value="1"/>
</dbReference>
<dbReference type="Pfam" id="PF08516">
    <property type="entry name" value="ADAM_CR"/>
    <property type="match status" value="1"/>
</dbReference>
<dbReference type="Pfam" id="PF00200">
    <property type="entry name" value="Disintegrin"/>
    <property type="match status" value="1"/>
</dbReference>
<dbReference type="Pfam" id="PF01562">
    <property type="entry name" value="Pep_M12B_propep"/>
    <property type="match status" value="1"/>
</dbReference>
<dbReference type="Pfam" id="PF01421">
    <property type="entry name" value="Reprolysin"/>
    <property type="match status" value="1"/>
</dbReference>
<dbReference type="PRINTS" id="PR00289">
    <property type="entry name" value="DISINTEGRIN"/>
</dbReference>
<dbReference type="SMART" id="SM00608">
    <property type="entry name" value="ACR"/>
    <property type="match status" value="1"/>
</dbReference>
<dbReference type="SMART" id="SM00050">
    <property type="entry name" value="DISIN"/>
    <property type="match status" value="1"/>
</dbReference>
<dbReference type="SUPFAM" id="SSF57552">
    <property type="entry name" value="Blood coagulation inhibitor (disintegrin)"/>
    <property type="match status" value="1"/>
</dbReference>
<dbReference type="SUPFAM" id="SSF55486">
    <property type="entry name" value="Metalloproteases ('zincins'), catalytic domain"/>
    <property type="match status" value="1"/>
</dbReference>
<dbReference type="PROSITE" id="PS50215">
    <property type="entry name" value="ADAM_MEPRO"/>
    <property type="match status" value="1"/>
</dbReference>
<dbReference type="PROSITE" id="PS00427">
    <property type="entry name" value="DISINTEGRIN_1"/>
    <property type="match status" value="1"/>
</dbReference>
<dbReference type="PROSITE" id="PS50214">
    <property type="entry name" value="DISINTEGRIN_2"/>
    <property type="match status" value="1"/>
</dbReference>
<dbReference type="PROSITE" id="PS01186">
    <property type="entry name" value="EGF_2"/>
    <property type="match status" value="1"/>
</dbReference>
<dbReference type="PROSITE" id="PS50026">
    <property type="entry name" value="EGF_3"/>
    <property type="match status" value="1"/>
</dbReference>
<proteinExistence type="evidence at protein level"/>
<gene>
    <name type="primary">ADAM30</name>
    <name type="ORF">UNQ2509/PRO5997</name>
</gene>
<organism>
    <name type="scientific">Homo sapiens</name>
    <name type="common">Human</name>
    <dbReference type="NCBI Taxonomy" id="9606"/>
    <lineage>
        <taxon>Eukaryota</taxon>
        <taxon>Metazoa</taxon>
        <taxon>Chordata</taxon>
        <taxon>Craniata</taxon>
        <taxon>Vertebrata</taxon>
        <taxon>Euteleostomi</taxon>
        <taxon>Mammalia</taxon>
        <taxon>Eutheria</taxon>
        <taxon>Euarchontoglires</taxon>
        <taxon>Primates</taxon>
        <taxon>Haplorrhini</taxon>
        <taxon>Catarrhini</taxon>
        <taxon>Hominidae</taxon>
        <taxon>Homo</taxon>
    </lineage>
</organism>
<accession>Q9UKF2</accession>
<accession>A8K8W8</accession>
<accession>Q5T3X6</accession>
<accession>Q9UKF1</accession>
<comment type="function">
    <text evidence="9">Plays a role in lysosomal amyloid precursor protein (APP) processing by cleaving and activating CTSD/cathepsin D which leads to APP degradation (PubMed:27333034).</text>
</comment>
<comment type="cofactor">
    <cofactor evidence="1">
        <name>Zn(2+)</name>
        <dbReference type="ChEBI" id="CHEBI:29105"/>
    </cofactor>
    <text evidence="1">Binds 1 zinc ion per subunit.</text>
</comment>
<comment type="subunit">
    <text evidence="9">Interacts with CTSD; this leads to activation of CTSD.</text>
</comment>
<comment type="subcellular location">
    <subcellularLocation>
        <location evidence="9">Late endosome membrane</location>
        <topology evidence="2">Single-pass type I membrane protein</topology>
    </subcellularLocation>
</comment>
<comment type="alternative products">
    <event type="alternative splicing"/>
    <isoform>
        <id>Q9UKF2-1</id>
        <name>Alpha</name>
        <sequence type="displayed"/>
    </isoform>
    <isoform>
        <id>Q9UKF2-2</id>
        <name>Beta</name>
        <sequence type="described" ref="VSP_005494"/>
    </isoform>
</comment>
<comment type="tissue specificity">
    <text evidence="7 9">Expressed in brain neurons (at protein level) (PubMed:27333034). Expressed in testis (PubMed:10512762).</text>
</comment>
<comment type="domain">
    <text>The conserved cysteine present in the cysteine-switch motif binds the catalytic zinc ion, thus inhibiting the enzyme. The dissociation of the cysteine from the zinc ion upon the activation-peptide release activates the enzyme.</text>
</comment>